<reference key="1">
    <citation type="journal article" date="2005" name="Infect. Immun.">
        <title>Whole-genome analyses of speciation events in pathogenic Brucellae.</title>
        <authorList>
            <person name="Chain P.S."/>
            <person name="Comerci D.J."/>
            <person name="Tolmasky M.E."/>
            <person name="Larimer F.W."/>
            <person name="Malfatti S.A."/>
            <person name="Vergez L.M."/>
            <person name="Aguero F."/>
            <person name="Land M.L."/>
            <person name="Ugalde R.A."/>
            <person name="Garcia E."/>
        </authorList>
    </citation>
    <scope>NUCLEOTIDE SEQUENCE [LARGE SCALE GENOMIC DNA]</scope>
    <source>
        <strain>2308</strain>
    </source>
</reference>
<sequence>MAESINSLEELGTVAKTEAAAPVHVQKLDAQGRAYATGKRKDAVARVWVKPGTGKITVNDKEFEKYFARPVLQMILQQPIVASNRAGQFDIVATVAGGGLSGQAGAVRHGISKALTDYEPGLRTVLKKGGFLTRDSRVVERKKYGKAKARRSFQFSKR</sequence>
<comment type="similarity">
    <text evidence="1">Belongs to the universal ribosomal protein uS9 family.</text>
</comment>
<gene>
    <name evidence="1" type="primary">rpsI</name>
    <name type="ordered locus">BAB1_0810</name>
</gene>
<dbReference type="EMBL" id="AM040264">
    <property type="protein sequence ID" value="CAJ10766.1"/>
    <property type="molecule type" value="Genomic_DNA"/>
</dbReference>
<dbReference type="RefSeq" id="WP_002966767.1">
    <property type="nucleotide sequence ID" value="NZ_KN046823.1"/>
</dbReference>
<dbReference type="SMR" id="Q2YND9"/>
<dbReference type="STRING" id="359391.BAB1_0810"/>
<dbReference type="GeneID" id="93016821"/>
<dbReference type="KEGG" id="bmf:BAB1_0810"/>
<dbReference type="PATRIC" id="fig|359391.11.peg.3122"/>
<dbReference type="HOGENOM" id="CLU_046483_2_0_5"/>
<dbReference type="PhylomeDB" id="Q2YND9"/>
<dbReference type="Proteomes" id="UP000002719">
    <property type="component" value="Chromosome I"/>
</dbReference>
<dbReference type="GO" id="GO:0022627">
    <property type="term" value="C:cytosolic small ribosomal subunit"/>
    <property type="evidence" value="ECO:0007669"/>
    <property type="project" value="TreeGrafter"/>
</dbReference>
<dbReference type="GO" id="GO:0003723">
    <property type="term" value="F:RNA binding"/>
    <property type="evidence" value="ECO:0007669"/>
    <property type="project" value="TreeGrafter"/>
</dbReference>
<dbReference type="GO" id="GO:0003735">
    <property type="term" value="F:structural constituent of ribosome"/>
    <property type="evidence" value="ECO:0007669"/>
    <property type="project" value="InterPro"/>
</dbReference>
<dbReference type="GO" id="GO:0006412">
    <property type="term" value="P:translation"/>
    <property type="evidence" value="ECO:0007669"/>
    <property type="project" value="UniProtKB-UniRule"/>
</dbReference>
<dbReference type="FunFam" id="3.30.230.10:FF:000034">
    <property type="entry name" value="30S ribosomal protein S9"/>
    <property type="match status" value="1"/>
</dbReference>
<dbReference type="Gene3D" id="3.30.230.10">
    <property type="match status" value="1"/>
</dbReference>
<dbReference type="HAMAP" id="MF_00532_B">
    <property type="entry name" value="Ribosomal_uS9_B"/>
    <property type="match status" value="1"/>
</dbReference>
<dbReference type="InterPro" id="IPR020568">
    <property type="entry name" value="Ribosomal_Su5_D2-typ_SF"/>
</dbReference>
<dbReference type="InterPro" id="IPR000754">
    <property type="entry name" value="Ribosomal_uS9"/>
</dbReference>
<dbReference type="InterPro" id="IPR023035">
    <property type="entry name" value="Ribosomal_uS9_bac/plastid"/>
</dbReference>
<dbReference type="InterPro" id="IPR020574">
    <property type="entry name" value="Ribosomal_uS9_CS"/>
</dbReference>
<dbReference type="InterPro" id="IPR014721">
    <property type="entry name" value="Ribsml_uS5_D2-typ_fold_subgr"/>
</dbReference>
<dbReference type="NCBIfam" id="NF001099">
    <property type="entry name" value="PRK00132.1"/>
    <property type="match status" value="1"/>
</dbReference>
<dbReference type="PANTHER" id="PTHR21569">
    <property type="entry name" value="RIBOSOMAL PROTEIN S9"/>
    <property type="match status" value="1"/>
</dbReference>
<dbReference type="PANTHER" id="PTHR21569:SF1">
    <property type="entry name" value="SMALL RIBOSOMAL SUBUNIT PROTEIN US9M"/>
    <property type="match status" value="1"/>
</dbReference>
<dbReference type="Pfam" id="PF00380">
    <property type="entry name" value="Ribosomal_S9"/>
    <property type="match status" value="1"/>
</dbReference>
<dbReference type="SUPFAM" id="SSF54211">
    <property type="entry name" value="Ribosomal protein S5 domain 2-like"/>
    <property type="match status" value="1"/>
</dbReference>
<dbReference type="PROSITE" id="PS00360">
    <property type="entry name" value="RIBOSOMAL_S9"/>
    <property type="match status" value="1"/>
</dbReference>
<organism>
    <name type="scientific">Brucella abortus (strain 2308)</name>
    <dbReference type="NCBI Taxonomy" id="359391"/>
    <lineage>
        <taxon>Bacteria</taxon>
        <taxon>Pseudomonadati</taxon>
        <taxon>Pseudomonadota</taxon>
        <taxon>Alphaproteobacteria</taxon>
        <taxon>Hyphomicrobiales</taxon>
        <taxon>Brucellaceae</taxon>
        <taxon>Brucella/Ochrobactrum group</taxon>
        <taxon>Brucella</taxon>
    </lineage>
</organism>
<feature type="chain" id="PRO_1000051177" description="Small ribosomal subunit protein uS9">
    <location>
        <begin position="1"/>
        <end position="158"/>
    </location>
</feature>
<evidence type="ECO:0000255" key="1">
    <source>
        <dbReference type="HAMAP-Rule" id="MF_00532"/>
    </source>
</evidence>
<evidence type="ECO:0000305" key="2"/>
<proteinExistence type="inferred from homology"/>
<protein>
    <recommendedName>
        <fullName evidence="1">Small ribosomal subunit protein uS9</fullName>
    </recommendedName>
    <alternativeName>
        <fullName evidence="2">30S ribosomal protein S9</fullName>
    </alternativeName>
</protein>
<accession>Q2YND9</accession>
<keyword id="KW-1185">Reference proteome</keyword>
<keyword id="KW-0687">Ribonucleoprotein</keyword>
<keyword id="KW-0689">Ribosomal protein</keyword>
<name>RS9_BRUA2</name>